<accession>Q9LXG9</accession>
<evidence type="ECO:0000250" key="1">
    <source>
        <dbReference type="UniProtKB" id="Q8LGJ5"/>
    </source>
</evidence>
<evidence type="ECO:0000256" key="2">
    <source>
        <dbReference type="SAM" id="MobiDB-lite"/>
    </source>
</evidence>
<evidence type="ECO:0000269" key="3">
    <source>
    </source>
</evidence>
<evidence type="ECO:0000269" key="4">
    <source>
    </source>
</evidence>
<evidence type="ECO:0000269" key="5">
    <source>
    </source>
</evidence>
<evidence type="ECO:0000269" key="6">
    <source>
    </source>
</evidence>
<evidence type="ECO:0000303" key="7">
    <source>
    </source>
</evidence>
<evidence type="ECO:0000303" key="8">
    <source>
    </source>
</evidence>
<evidence type="ECO:0000303" key="9">
    <source>
    </source>
</evidence>
<evidence type="ECO:0000305" key="10"/>
<evidence type="ECO:0000312" key="11">
    <source>
        <dbReference type="Araport" id="AT5G15120"/>
    </source>
</evidence>
<evidence type="ECO:0000312" key="12">
    <source>
        <dbReference type="EMBL" id="CAB89322.1"/>
    </source>
</evidence>
<dbReference type="EC" id="1.13.11.20" evidence="4 6"/>
<dbReference type="EMBL" id="AL353993">
    <property type="protein sequence ID" value="CAB89322.1"/>
    <property type="molecule type" value="Genomic_DNA"/>
</dbReference>
<dbReference type="EMBL" id="CP002688">
    <property type="protein sequence ID" value="AED92119.1"/>
    <property type="molecule type" value="Genomic_DNA"/>
</dbReference>
<dbReference type="EMBL" id="BT008337">
    <property type="protein sequence ID" value="AAP37696.1"/>
    <property type="molecule type" value="mRNA"/>
</dbReference>
<dbReference type="EMBL" id="AK228354">
    <property type="protein sequence ID" value="BAF00293.1"/>
    <property type="molecule type" value="mRNA"/>
</dbReference>
<dbReference type="PIR" id="T49947">
    <property type="entry name" value="T49947"/>
</dbReference>
<dbReference type="RefSeq" id="NP_197016.1">
    <property type="nucleotide sequence ID" value="NM_121516.4"/>
</dbReference>
<dbReference type="SMR" id="Q9LXG9"/>
<dbReference type="FunCoup" id="Q9LXG9">
    <property type="interactions" value="1784"/>
</dbReference>
<dbReference type="STRING" id="3702.Q9LXG9"/>
<dbReference type="iPTMnet" id="Q9LXG9"/>
<dbReference type="PaxDb" id="3702-AT5G15120.1"/>
<dbReference type="ProteomicsDB" id="236361"/>
<dbReference type="EnsemblPlants" id="AT5G15120.1">
    <property type="protein sequence ID" value="AT5G15120.1"/>
    <property type="gene ID" value="AT5G15120"/>
</dbReference>
<dbReference type="GeneID" id="831364"/>
<dbReference type="Gramene" id="AT5G15120.1">
    <property type="protein sequence ID" value="AT5G15120.1"/>
    <property type="gene ID" value="AT5G15120"/>
</dbReference>
<dbReference type="KEGG" id="ath:AT5G15120"/>
<dbReference type="Araport" id="AT5G15120"/>
<dbReference type="TAIR" id="AT5G15120">
    <property type="gene designation" value="PCO1"/>
</dbReference>
<dbReference type="eggNOG" id="KOG4281">
    <property type="taxonomic scope" value="Eukaryota"/>
</dbReference>
<dbReference type="HOGENOM" id="CLU_061320_4_1_1"/>
<dbReference type="InParanoid" id="Q9LXG9"/>
<dbReference type="OMA" id="ERECHAW"/>
<dbReference type="PhylomeDB" id="Q9LXG9"/>
<dbReference type="SABIO-RK" id="Q9LXG9"/>
<dbReference type="PRO" id="PR:Q9LXG9"/>
<dbReference type="Proteomes" id="UP000006548">
    <property type="component" value="Chromosome 5"/>
</dbReference>
<dbReference type="ExpressionAtlas" id="Q9LXG9">
    <property type="expression patterns" value="baseline and differential"/>
</dbReference>
<dbReference type="GO" id="GO:0005829">
    <property type="term" value="C:cytosol"/>
    <property type="evidence" value="ECO:0000314"/>
    <property type="project" value="TAIR"/>
</dbReference>
<dbReference type="GO" id="GO:0005634">
    <property type="term" value="C:nucleus"/>
    <property type="evidence" value="ECO:0000314"/>
    <property type="project" value="TAIR"/>
</dbReference>
<dbReference type="GO" id="GO:0017172">
    <property type="term" value="F:cysteine dioxygenase activity"/>
    <property type="evidence" value="ECO:0007669"/>
    <property type="project" value="UniProtKB-EC"/>
</dbReference>
<dbReference type="GO" id="GO:0005506">
    <property type="term" value="F:iron ion binding"/>
    <property type="evidence" value="ECO:0000250"/>
    <property type="project" value="UniProtKB"/>
</dbReference>
<dbReference type="GO" id="GO:0009061">
    <property type="term" value="P:anaerobic respiration"/>
    <property type="evidence" value="ECO:0000315"/>
    <property type="project" value="TAIR"/>
</dbReference>
<dbReference type="GO" id="GO:0071456">
    <property type="term" value="P:cellular response to hypoxia"/>
    <property type="evidence" value="ECO:0007007"/>
    <property type="project" value="TAIR"/>
</dbReference>
<dbReference type="GO" id="GO:0070483">
    <property type="term" value="P:detection of hypoxia"/>
    <property type="evidence" value="ECO:0000315"/>
    <property type="project" value="TAIR"/>
</dbReference>
<dbReference type="GO" id="GO:0018171">
    <property type="term" value="P:peptidyl-cysteine oxidation"/>
    <property type="evidence" value="ECO:0000314"/>
    <property type="project" value="TAIR"/>
</dbReference>
<dbReference type="GO" id="GO:0001666">
    <property type="term" value="P:response to hypoxia"/>
    <property type="evidence" value="ECO:0000315"/>
    <property type="project" value="TAIR"/>
</dbReference>
<dbReference type="CDD" id="cd20289">
    <property type="entry name" value="cupin_ADO"/>
    <property type="match status" value="1"/>
</dbReference>
<dbReference type="FunFam" id="2.60.120.10:FF:000342">
    <property type="entry name" value="Plant cysteine oxidase 1"/>
    <property type="match status" value="1"/>
</dbReference>
<dbReference type="Gene3D" id="2.60.120.10">
    <property type="entry name" value="Jelly Rolls"/>
    <property type="match status" value="1"/>
</dbReference>
<dbReference type="InterPro" id="IPR012864">
    <property type="entry name" value="PCO/ADO"/>
</dbReference>
<dbReference type="InterPro" id="IPR014710">
    <property type="entry name" value="RmlC-like_jellyroll"/>
</dbReference>
<dbReference type="InterPro" id="IPR011051">
    <property type="entry name" value="RmlC_Cupin_sf"/>
</dbReference>
<dbReference type="PANTHER" id="PTHR22966">
    <property type="entry name" value="2-AMINOETHANETHIOL DIOXYGENASE"/>
    <property type="match status" value="1"/>
</dbReference>
<dbReference type="PANTHER" id="PTHR22966:SF1">
    <property type="entry name" value="PLANT CYSTEINE OXIDASE 1"/>
    <property type="match status" value="1"/>
</dbReference>
<dbReference type="Pfam" id="PF07847">
    <property type="entry name" value="PCO_ADO"/>
    <property type="match status" value="1"/>
</dbReference>
<dbReference type="SUPFAM" id="SSF51182">
    <property type="entry name" value="RmlC-like cupins"/>
    <property type="match status" value="1"/>
</dbReference>
<feature type="chain" id="PRO_0000432449" description="Plant cysteine oxidase 1">
    <location>
        <begin position="1"/>
        <end position="293"/>
    </location>
</feature>
<feature type="region of interest" description="Disordered" evidence="2">
    <location>
        <begin position="250"/>
        <end position="293"/>
    </location>
</feature>
<feature type="compositionally biased region" description="Acidic residues" evidence="2">
    <location>
        <begin position="251"/>
        <end position="262"/>
    </location>
</feature>
<feature type="compositionally biased region" description="Basic and acidic residues" evidence="2">
    <location>
        <begin position="269"/>
        <end position="279"/>
    </location>
</feature>
<feature type="binding site" evidence="1">
    <location>
        <position position="148"/>
    </location>
    <ligand>
        <name>Fe cation</name>
        <dbReference type="ChEBI" id="CHEBI:24875"/>
        <note>catalytic</note>
    </ligand>
</feature>
<feature type="binding site" evidence="1">
    <location>
        <position position="150"/>
    </location>
    <ligand>
        <name>Fe cation</name>
        <dbReference type="ChEBI" id="CHEBI:24875"/>
        <note>catalytic</note>
    </ligand>
</feature>
<feature type="binding site" evidence="1">
    <location>
        <position position="211"/>
    </location>
    <ligand>
        <name>Fe cation</name>
        <dbReference type="ChEBI" id="CHEBI:24875"/>
        <note>catalytic</note>
    </ligand>
</feature>
<gene>
    <name evidence="8" type="primary">PCO1</name>
    <name evidence="7" type="synonym">HUP29</name>
    <name evidence="11" type="ordered locus">At5g15120</name>
    <name evidence="12" type="ORF">F8M21.10</name>
</gene>
<organism>
    <name type="scientific">Arabidopsis thaliana</name>
    <name type="common">Mouse-ear cress</name>
    <dbReference type="NCBI Taxonomy" id="3702"/>
    <lineage>
        <taxon>Eukaryota</taxon>
        <taxon>Viridiplantae</taxon>
        <taxon>Streptophyta</taxon>
        <taxon>Embryophyta</taxon>
        <taxon>Tracheophyta</taxon>
        <taxon>Spermatophyta</taxon>
        <taxon>Magnoliopsida</taxon>
        <taxon>eudicotyledons</taxon>
        <taxon>Gunneridae</taxon>
        <taxon>Pentapetalae</taxon>
        <taxon>rosids</taxon>
        <taxon>malvids</taxon>
        <taxon>Brassicales</taxon>
        <taxon>Brassicaceae</taxon>
        <taxon>Camelineae</taxon>
        <taxon>Arabidopsis</taxon>
    </lineage>
</organism>
<reference key="1">
    <citation type="journal article" date="2000" name="Nature">
        <title>Sequence and analysis of chromosome 5 of the plant Arabidopsis thaliana.</title>
        <authorList>
            <person name="Tabata S."/>
            <person name="Kaneko T."/>
            <person name="Nakamura Y."/>
            <person name="Kotani H."/>
            <person name="Kato T."/>
            <person name="Asamizu E."/>
            <person name="Miyajima N."/>
            <person name="Sasamoto S."/>
            <person name="Kimura T."/>
            <person name="Hosouchi T."/>
            <person name="Kawashima K."/>
            <person name="Kohara M."/>
            <person name="Matsumoto M."/>
            <person name="Matsuno A."/>
            <person name="Muraki A."/>
            <person name="Nakayama S."/>
            <person name="Nakazaki N."/>
            <person name="Naruo K."/>
            <person name="Okumura S."/>
            <person name="Shinpo S."/>
            <person name="Takeuchi C."/>
            <person name="Wada T."/>
            <person name="Watanabe A."/>
            <person name="Yamada M."/>
            <person name="Yasuda M."/>
            <person name="Sato S."/>
            <person name="de la Bastide M."/>
            <person name="Huang E."/>
            <person name="Spiegel L."/>
            <person name="Gnoj L."/>
            <person name="O'Shaughnessy A."/>
            <person name="Preston R."/>
            <person name="Habermann K."/>
            <person name="Murray J."/>
            <person name="Johnson D."/>
            <person name="Rohlfing T."/>
            <person name="Nelson J."/>
            <person name="Stoneking T."/>
            <person name="Pepin K."/>
            <person name="Spieth J."/>
            <person name="Sekhon M."/>
            <person name="Armstrong J."/>
            <person name="Becker M."/>
            <person name="Belter E."/>
            <person name="Cordum H."/>
            <person name="Cordes M."/>
            <person name="Courtney L."/>
            <person name="Courtney W."/>
            <person name="Dante M."/>
            <person name="Du H."/>
            <person name="Edwards J."/>
            <person name="Fryman J."/>
            <person name="Haakensen B."/>
            <person name="Lamar E."/>
            <person name="Latreille P."/>
            <person name="Leonard S."/>
            <person name="Meyer R."/>
            <person name="Mulvaney E."/>
            <person name="Ozersky P."/>
            <person name="Riley A."/>
            <person name="Strowmatt C."/>
            <person name="Wagner-McPherson C."/>
            <person name="Wollam A."/>
            <person name="Yoakum M."/>
            <person name="Bell M."/>
            <person name="Dedhia N."/>
            <person name="Parnell L."/>
            <person name="Shah R."/>
            <person name="Rodriguez M."/>
            <person name="Hoon See L."/>
            <person name="Vil D."/>
            <person name="Baker J."/>
            <person name="Kirchoff K."/>
            <person name="Toth K."/>
            <person name="King L."/>
            <person name="Bahret A."/>
            <person name="Miller B."/>
            <person name="Marra M.A."/>
            <person name="Martienssen R."/>
            <person name="McCombie W.R."/>
            <person name="Wilson R.K."/>
            <person name="Murphy G."/>
            <person name="Bancroft I."/>
            <person name="Volckaert G."/>
            <person name="Wambutt R."/>
            <person name="Duesterhoeft A."/>
            <person name="Stiekema W."/>
            <person name="Pohl T."/>
            <person name="Entian K.-D."/>
            <person name="Terryn N."/>
            <person name="Hartley N."/>
            <person name="Bent E."/>
            <person name="Johnson S."/>
            <person name="Langham S.-A."/>
            <person name="McCullagh B."/>
            <person name="Robben J."/>
            <person name="Grymonprez B."/>
            <person name="Zimmermann W."/>
            <person name="Ramsperger U."/>
            <person name="Wedler H."/>
            <person name="Balke K."/>
            <person name="Wedler E."/>
            <person name="Peters S."/>
            <person name="van Staveren M."/>
            <person name="Dirkse W."/>
            <person name="Mooijman P."/>
            <person name="Klein Lankhorst R."/>
            <person name="Weitzenegger T."/>
            <person name="Bothe G."/>
            <person name="Rose M."/>
            <person name="Hauf J."/>
            <person name="Berneiser S."/>
            <person name="Hempel S."/>
            <person name="Feldpausch M."/>
            <person name="Lamberth S."/>
            <person name="Villarroel R."/>
            <person name="Gielen J."/>
            <person name="Ardiles W."/>
            <person name="Bents O."/>
            <person name="Lemcke K."/>
            <person name="Kolesov G."/>
            <person name="Mayer K.F.X."/>
            <person name="Rudd S."/>
            <person name="Schoof H."/>
            <person name="Schueller C."/>
            <person name="Zaccaria P."/>
            <person name="Mewes H.-W."/>
            <person name="Bevan M."/>
            <person name="Fransz P.F."/>
        </authorList>
    </citation>
    <scope>NUCLEOTIDE SEQUENCE [LARGE SCALE GENOMIC DNA]</scope>
    <source>
        <strain>cv. Columbia</strain>
    </source>
</reference>
<reference key="2">
    <citation type="journal article" date="2017" name="Plant J.">
        <title>Araport11: a complete reannotation of the Arabidopsis thaliana reference genome.</title>
        <authorList>
            <person name="Cheng C.Y."/>
            <person name="Krishnakumar V."/>
            <person name="Chan A.P."/>
            <person name="Thibaud-Nissen F."/>
            <person name="Schobel S."/>
            <person name="Town C.D."/>
        </authorList>
    </citation>
    <scope>GENOME REANNOTATION</scope>
    <source>
        <strain>cv. Columbia</strain>
    </source>
</reference>
<reference key="3">
    <citation type="journal article" date="2003" name="Science">
        <title>Empirical analysis of transcriptional activity in the Arabidopsis genome.</title>
        <authorList>
            <person name="Yamada K."/>
            <person name="Lim J."/>
            <person name="Dale J.M."/>
            <person name="Chen H."/>
            <person name="Shinn P."/>
            <person name="Palm C.J."/>
            <person name="Southwick A.M."/>
            <person name="Wu H.C."/>
            <person name="Kim C.J."/>
            <person name="Nguyen M."/>
            <person name="Pham P.K."/>
            <person name="Cheuk R.F."/>
            <person name="Karlin-Newmann G."/>
            <person name="Liu S.X."/>
            <person name="Lam B."/>
            <person name="Sakano H."/>
            <person name="Wu T."/>
            <person name="Yu G."/>
            <person name="Miranda M."/>
            <person name="Quach H.L."/>
            <person name="Tripp M."/>
            <person name="Chang C.H."/>
            <person name="Lee J.M."/>
            <person name="Toriumi M.J."/>
            <person name="Chan M.M."/>
            <person name="Tang C.C."/>
            <person name="Onodera C.S."/>
            <person name="Deng J.M."/>
            <person name="Akiyama K."/>
            <person name="Ansari Y."/>
            <person name="Arakawa T."/>
            <person name="Banh J."/>
            <person name="Banno F."/>
            <person name="Bowser L."/>
            <person name="Brooks S.Y."/>
            <person name="Carninci P."/>
            <person name="Chao Q."/>
            <person name="Choy N."/>
            <person name="Enju A."/>
            <person name="Goldsmith A.D."/>
            <person name="Gurjal M."/>
            <person name="Hansen N.F."/>
            <person name="Hayashizaki Y."/>
            <person name="Johnson-Hopson C."/>
            <person name="Hsuan V.W."/>
            <person name="Iida K."/>
            <person name="Karnes M."/>
            <person name="Khan S."/>
            <person name="Koesema E."/>
            <person name="Ishida J."/>
            <person name="Jiang P.X."/>
            <person name="Jones T."/>
            <person name="Kawai J."/>
            <person name="Kamiya A."/>
            <person name="Meyers C."/>
            <person name="Nakajima M."/>
            <person name="Narusaka M."/>
            <person name="Seki M."/>
            <person name="Sakurai T."/>
            <person name="Satou M."/>
            <person name="Tamse R."/>
            <person name="Vaysberg M."/>
            <person name="Wallender E.K."/>
            <person name="Wong C."/>
            <person name="Yamamura Y."/>
            <person name="Yuan S."/>
            <person name="Shinozaki K."/>
            <person name="Davis R.W."/>
            <person name="Theologis A."/>
            <person name="Ecker J.R."/>
        </authorList>
    </citation>
    <scope>NUCLEOTIDE SEQUENCE [LARGE SCALE MRNA]</scope>
    <source>
        <strain>cv. Columbia</strain>
    </source>
</reference>
<reference key="4">
    <citation type="submission" date="2006-07" db="EMBL/GenBank/DDBJ databases">
        <title>Large-scale analysis of RIKEN Arabidopsis full-length (RAFL) cDNAs.</title>
        <authorList>
            <person name="Totoki Y."/>
            <person name="Seki M."/>
            <person name="Ishida J."/>
            <person name="Nakajima M."/>
            <person name="Enju A."/>
            <person name="Kamiya A."/>
            <person name="Narusaka M."/>
            <person name="Shin-i T."/>
            <person name="Nakagawa M."/>
            <person name="Sakamoto N."/>
            <person name="Oishi K."/>
            <person name="Kohara Y."/>
            <person name="Kobayashi M."/>
            <person name="Toyoda A."/>
            <person name="Sakaki Y."/>
            <person name="Sakurai T."/>
            <person name="Iida K."/>
            <person name="Akiyama K."/>
            <person name="Satou M."/>
            <person name="Toyoda T."/>
            <person name="Konagaya A."/>
            <person name="Carninci P."/>
            <person name="Kawai J."/>
            <person name="Hayashizaki Y."/>
            <person name="Shinozaki K."/>
        </authorList>
    </citation>
    <scope>NUCLEOTIDE SEQUENCE [LARGE SCALE MRNA]</scope>
    <source>
        <strain>cv. Columbia</strain>
    </source>
</reference>
<reference key="5">
    <citation type="journal article" date="2010" name="Plant Physiol.">
        <title>Cross-kingdom comparison of transcriptomic adjustments to low-oxygen stress highlights conserved and plant-specific responses.</title>
        <authorList>
            <person name="Mustroph A."/>
            <person name="Lee S.C."/>
            <person name="Oosumi T."/>
            <person name="Zanetti M.E."/>
            <person name="Yang H."/>
            <person name="Ma K."/>
            <person name="Yaghoubi-Masihi A."/>
            <person name="Fukao T."/>
            <person name="Bailey-Serres J."/>
        </authorList>
    </citation>
    <scope>INDUCTION BY HYPOXIA</scope>
</reference>
<reference key="6">
    <citation type="journal article" date="2014" name="Nat. Commun.">
        <title>Plant cysteine oxidases control the oxygen-dependent branch of the N-end-rule pathway.</title>
        <authorList>
            <person name="Weits D.A."/>
            <person name="Giuntoli B."/>
            <person name="Kosmacz M."/>
            <person name="Parlanti S."/>
            <person name="Hubberten H.M."/>
            <person name="Riegler H."/>
            <person name="Hoefgen R."/>
            <person name="Perata P."/>
            <person name="van Dongen J.T."/>
            <person name="Licausi F."/>
        </authorList>
    </citation>
    <scope>FUNCTION</scope>
    <scope>CATALYTIC ACTIVITY</scope>
    <scope>INDUCTION</scope>
    <scope>GENE FAMILY</scope>
    <scope>NOMENCLATURE</scope>
    <scope>SUBCELLULAR LOCATION</scope>
    <scope>DEVELOPMENTAL STAGE</scope>
</reference>
<reference key="7">
    <citation type="journal article" date="2017" name="Nat. Commun.">
        <title>Plant cysteine oxidases are dioxygenases that directly enable arginyl transferase-catalysed arginylation of N-end rule targets.</title>
        <authorList>
            <person name="White M.D."/>
            <person name="Klecker M."/>
            <person name="Hopkinson R.J."/>
            <person name="Weits D.A."/>
            <person name="Mueller C."/>
            <person name="Naumann C."/>
            <person name="O'Neill R."/>
            <person name="Wickens J."/>
            <person name="Yang J."/>
            <person name="Brooks-Bartlett J.C."/>
            <person name="Garman E.F."/>
            <person name="Grossmann T.N."/>
            <person name="Dissmeyer N."/>
            <person name="Flashman E."/>
        </authorList>
    </citation>
    <scope>FUNCTION</scope>
</reference>
<reference key="8">
    <citation type="journal article" date="2018" name="J. Biol. Chem.">
        <title>The plant cysteine oxidases from Arabidopsis thaliana are kinetically tailored to act as oxygen sensors.</title>
        <authorList>
            <person name="White M.D."/>
            <person name="Kamps J.J.A.G."/>
            <person name="East S."/>
            <person name="Taylor Kearney L.J."/>
            <person name="Flashman E."/>
        </authorList>
    </citation>
    <scope>FUNCTION</scope>
    <scope>CATALYTIC ACTIVITY</scope>
    <scope>BIOPHYSICOCHEMICAL PROPERTIES</scope>
</reference>
<sequence>MGFEMKPEKEVLELISSKNQCKSNPNSVKKKNKNKNKKMMMTWRRKKIDSPADGITAVRRLFNTCKEVFSNGGPGVIPSEDKIQQLREILDDMKPEDVGLTPTMPYFRPNSGVEARSSPPITYLHLHQCDQFSIGIFCLPPSGVIPLHNHPGMTVFSKLLFGTMHIKSYDWVVDAPMRDSKTRLAKLKVDSTFTAPCNASILYPEDGGNMHRFTAITACAVLDVLGPPYCNPEGRHCTYFLEFPLDKLSSEDDDVLSSEEEKEGYAWLQERDDNPEDHTNVVGALYRGPKVED</sequence>
<proteinExistence type="evidence at protein level"/>
<comment type="function">
    <text evidence="4 5 6">Catalyzes the oxidation of N-terminal cysteine residues (N-Cys), thus preparing the protein for N-end rule pathway-mediated proteasomal degradation, upstream of the N-end rule enzymes ATE1, ATE2 and PRT6 (PubMed:24599061, PubMed:29848548). Controls the preparation of the group VII ethylene response factor (ERF-VII) proteins for degradation via the 26S proteasome N-end rule pathway (PubMed:24599061, PubMed:29848548). Acts as an oxygen sensor that controls the stability of ERF-VII proteins, which are stabilized in flooding-induced hypoxia, and regulate transcriptional adaptation to these adverse conditions (PubMed:28332493, PubMed:29848548). Not active on Cys located inside or at the C-terminus of a peptide (PubMed:24599061). Acts redundantly with PCO2 to repress the anaerobic response (PubMed:24599061).</text>
</comment>
<comment type="catalytic activity">
    <reaction evidence="4 6">
        <text>L-cysteine + O2 = 3-sulfino-L-alanine + H(+)</text>
        <dbReference type="Rhea" id="RHEA:20441"/>
        <dbReference type="ChEBI" id="CHEBI:15378"/>
        <dbReference type="ChEBI" id="CHEBI:15379"/>
        <dbReference type="ChEBI" id="CHEBI:35235"/>
        <dbReference type="ChEBI" id="CHEBI:61085"/>
        <dbReference type="EC" id="1.13.11.20"/>
    </reaction>
    <physiologicalReaction direction="left-to-right" evidence="4 6">
        <dbReference type="Rhea" id="RHEA:20442"/>
    </physiologicalReaction>
</comment>
<comment type="cofactor">
    <cofactor evidence="1">
        <name>Fe(2+)</name>
        <dbReference type="ChEBI" id="CHEBI:29033"/>
    </cofactor>
    <text evidence="1">Binds 1 Fe(2+) cation per subunit.</text>
</comment>
<comment type="biophysicochemical properties">
    <kinetics>
        <KM evidence="6">0.24 mM for CGGAIISDFIPPPR peptide</KM>
        <Vmax evidence="6">7.14 umol/min/mg enzyme with CGGAIISDFIPPPR peptide as substrate</Vmax>
        <text evidence="6">kcat is 4.18 sec(-1) with CGGAIISDFIPPPR peptide as substrate.</text>
    </kinetics>
    <phDependence>
        <text evidence="6">Optimum pH is 8.5 with CGGAIISDFIPPPR peptide as substrate.</text>
    </phDependence>
</comment>
<comment type="subcellular location">
    <subcellularLocation>
        <location evidence="4">Nucleus</location>
    </subcellularLocation>
    <subcellularLocation>
        <location evidence="4">Cytoplasm</location>
    </subcellularLocation>
</comment>
<comment type="developmental stage">
    <text evidence="4">Expressed throughout development, with the highest expression in mature siliques and during seed germination.</text>
</comment>
<comment type="induction">
    <text evidence="3 4">Up-regulated by hypoxia (PubMed:20097791). Up-regulated by the ERF-VII transcription factor RAP2-12 during hypoxia (PubMed:24599061).</text>
</comment>
<comment type="similarity">
    <text evidence="10">Belongs to the cysteine dioxygenase family.</text>
</comment>
<protein>
    <recommendedName>
        <fullName evidence="8">Plant cysteine oxidase 1</fullName>
        <shortName evidence="9">AtPCO1</shortName>
        <ecNumber evidence="4 6">1.13.11.20</ecNumber>
    </recommendedName>
    <alternativeName>
        <fullName evidence="7">Hypoxia-responsive unknown protein 29</fullName>
    </alternativeName>
</protein>
<keyword id="KW-0963">Cytoplasm</keyword>
<keyword id="KW-0408">Iron</keyword>
<keyword id="KW-0479">Metal-binding</keyword>
<keyword id="KW-0539">Nucleus</keyword>
<keyword id="KW-0560">Oxidoreductase</keyword>
<keyword id="KW-1185">Reference proteome</keyword>
<name>PCO1_ARATH</name>